<evidence type="ECO:0000255" key="1">
    <source>
        <dbReference type="HAMAP-Rule" id="MF_01599"/>
    </source>
</evidence>
<feature type="chain" id="PRO_1000148035" description="Na(+)/H(+) antiporter NhaB">
    <location>
        <begin position="1"/>
        <end position="513"/>
    </location>
</feature>
<feature type="transmembrane region" description="Helical" evidence="1">
    <location>
        <begin position="23"/>
        <end position="43"/>
    </location>
</feature>
<feature type="transmembrane region" description="Helical" evidence="1">
    <location>
        <begin position="52"/>
        <end position="72"/>
    </location>
</feature>
<feature type="transmembrane region" description="Helical" evidence="1">
    <location>
        <begin position="97"/>
        <end position="117"/>
    </location>
</feature>
<feature type="transmembrane region" description="Helical" evidence="1">
    <location>
        <begin position="120"/>
        <end position="140"/>
    </location>
</feature>
<feature type="transmembrane region" description="Helical" evidence="1">
    <location>
        <begin position="144"/>
        <end position="164"/>
    </location>
</feature>
<feature type="transmembrane region" description="Helical" evidence="1">
    <location>
        <begin position="202"/>
        <end position="222"/>
    </location>
</feature>
<feature type="transmembrane region" description="Helical" evidence="1">
    <location>
        <begin position="238"/>
        <end position="258"/>
    </location>
</feature>
<feature type="transmembrane region" description="Helical" evidence="1">
    <location>
        <begin position="303"/>
        <end position="323"/>
    </location>
</feature>
<feature type="transmembrane region" description="Helical" evidence="1">
    <location>
        <begin position="348"/>
        <end position="368"/>
    </location>
</feature>
<feature type="transmembrane region" description="Helical" evidence="1">
    <location>
        <begin position="391"/>
        <end position="411"/>
    </location>
</feature>
<feature type="transmembrane region" description="Helical" evidence="1">
    <location>
        <begin position="447"/>
        <end position="467"/>
    </location>
</feature>
<feature type="transmembrane region" description="Helical" evidence="1">
    <location>
        <begin position="475"/>
        <end position="495"/>
    </location>
</feature>
<protein>
    <recommendedName>
        <fullName evidence="1">Na(+)/H(+) antiporter NhaB</fullName>
    </recommendedName>
    <alternativeName>
        <fullName evidence="1">Sodium/proton antiporter NhaB</fullName>
    </alternativeName>
</protein>
<accession>B1XA73</accession>
<gene>
    <name evidence="1" type="primary">nhaB</name>
    <name type="ordered locus">ECDH10B_1239</name>
</gene>
<name>NHAB_ECODH</name>
<proteinExistence type="inferred from homology"/>
<sequence>MEISWGRALWRNFLGQSPDWYKLALIIFLIVNPLIFLISPFVAGWLLVAEFIFTLAMALKCYPLLPGGLLAIEAVFIGMTSAEHVREEVAANLEVLLLLMFMVAGIYFMKQLLLFIFTRLLLSIRSKMLLSLSFCVAAAFLSAFLDALTVVAVVISVAVGFYGIYHRVASSRTEDTDLQDDSHIDKHYKVVLEQFRGFLRSLMMHAGVGTALGGVMTMVGEPQNLIIAKAAGWHFGDFFLRMSPVTVPVLICGLLTCLLVEKLRWFGYGETLPEKVREVLQQFDDQSRHQRTRQDKIRLIVQAIIGVWLVTALALHLAEVGLIGLSVIILATSLTGVTDEHAIGKAFTESLPFTALLTVFFSVVAVIIDQQLFSPIIQFVLQASEHAQLSLFYIFNGLLSSISDNVFVGTIYINEAKAAMESGAITLKQYELLAVAINTGTNLPSVATPNGQAAFLFLLTSALAPLIRLSYGRMVWMALPYTLVLTLVGLLCVEFTLAPVTEWFMQMGWIATL</sequence>
<comment type="function">
    <text evidence="1">Na(+)/H(+) antiporter that extrudes sodium in exchange for external protons.</text>
</comment>
<comment type="catalytic activity">
    <reaction evidence="1">
        <text>2 Na(+)(in) + 3 H(+)(out) = 2 Na(+)(out) + 3 H(+)(in)</text>
        <dbReference type="Rhea" id="RHEA:29247"/>
        <dbReference type="ChEBI" id="CHEBI:15378"/>
        <dbReference type="ChEBI" id="CHEBI:29101"/>
    </reaction>
    <physiologicalReaction direction="left-to-right" evidence="1">
        <dbReference type="Rhea" id="RHEA:29248"/>
    </physiologicalReaction>
</comment>
<comment type="subcellular location">
    <subcellularLocation>
        <location evidence="1">Cell inner membrane</location>
        <topology evidence="1">Multi-pass membrane protein</topology>
    </subcellularLocation>
</comment>
<comment type="similarity">
    <text evidence="1">Belongs to the NhaB Na(+)/H(+) (TC 2.A.34) antiporter family.</text>
</comment>
<organism>
    <name type="scientific">Escherichia coli (strain K12 / DH10B)</name>
    <dbReference type="NCBI Taxonomy" id="316385"/>
    <lineage>
        <taxon>Bacteria</taxon>
        <taxon>Pseudomonadati</taxon>
        <taxon>Pseudomonadota</taxon>
        <taxon>Gammaproteobacteria</taxon>
        <taxon>Enterobacterales</taxon>
        <taxon>Enterobacteriaceae</taxon>
        <taxon>Escherichia</taxon>
    </lineage>
</organism>
<keyword id="KW-0050">Antiport</keyword>
<keyword id="KW-0997">Cell inner membrane</keyword>
<keyword id="KW-1003">Cell membrane</keyword>
<keyword id="KW-0406">Ion transport</keyword>
<keyword id="KW-0472">Membrane</keyword>
<keyword id="KW-0915">Sodium</keyword>
<keyword id="KW-0739">Sodium transport</keyword>
<keyword id="KW-0812">Transmembrane</keyword>
<keyword id="KW-1133">Transmembrane helix</keyword>
<keyword id="KW-0813">Transport</keyword>
<reference key="1">
    <citation type="journal article" date="2008" name="J. Bacteriol.">
        <title>The complete genome sequence of Escherichia coli DH10B: insights into the biology of a laboratory workhorse.</title>
        <authorList>
            <person name="Durfee T."/>
            <person name="Nelson R."/>
            <person name="Baldwin S."/>
            <person name="Plunkett G. III"/>
            <person name="Burland V."/>
            <person name="Mau B."/>
            <person name="Petrosino J.F."/>
            <person name="Qin X."/>
            <person name="Muzny D.M."/>
            <person name="Ayele M."/>
            <person name="Gibbs R.A."/>
            <person name="Csorgo B."/>
            <person name="Posfai G."/>
            <person name="Weinstock G.M."/>
            <person name="Blattner F.R."/>
        </authorList>
    </citation>
    <scope>NUCLEOTIDE SEQUENCE [LARGE SCALE GENOMIC DNA]</scope>
    <source>
        <strain>K12 / DH10B</strain>
    </source>
</reference>
<dbReference type="EMBL" id="CP000948">
    <property type="protein sequence ID" value="ACB02356.1"/>
    <property type="molecule type" value="Genomic_DNA"/>
</dbReference>
<dbReference type="RefSeq" id="WP_000406391.1">
    <property type="nucleotide sequence ID" value="NC_010473.1"/>
</dbReference>
<dbReference type="SMR" id="B1XA73"/>
<dbReference type="GeneID" id="75203299"/>
<dbReference type="KEGG" id="ecd:ECDH10B_1239"/>
<dbReference type="HOGENOM" id="CLU_041110_0_0_6"/>
<dbReference type="GO" id="GO:0005886">
    <property type="term" value="C:plasma membrane"/>
    <property type="evidence" value="ECO:0007669"/>
    <property type="project" value="UniProtKB-SubCell"/>
</dbReference>
<dbReference type="GO" id="GO:0015385">
    <property type="term" value="F:sodium:proton antiporter activity"/>
    <property type="evidence" value="ECO:0007669"/>
    <property type="project" value="InterPro"/>
</dbReference>
<dbReference type="HAMAP" id="MF_01599">
    <property type="entry name" value="NhaB"/>
    <property type="match status" value="1"/>
</dbReference>
<dbReference type="InterPro" id="IPR004671">
    <property type="entry name" value="Na+/H+_antiporter_NhaB"/>
</dbReference>
<dbReference type="NCBIfam" id="TIGR00774">
    <property type="entry name" value="NhaB"/>
    <property type="match status" value="1"/>
</dbReference>
<dbReference type="NCBIfam" id="NF007093">
    <property type="entry name" value="PRK09547.1"/>
    <property type="match status" value="1"/>
</dbReference>
<dbReference type="PANTHER" id="PTHR43302:SF1">
    <property type="entry name" value="NA(+)_H(+) ANTIPORTER NHAB"/>
    <property type="match status" value="1"/>
</dbReference>
<dbReference type="PANTHER" id="PTHR43302">
    <property type="entry name" value="TRANSPORTER ARSB-RELATED"/>
    <property type="match status" value="1"/>
</dbReference>
<dbReference type="Pfam" id="PF06450">
    <property type="entry name" value="NhaB"/>
    <property type="match status" value="1"/>
</dbReference>